<evidence type="ECO:0000255" key="1">
    <source>
        <dbReference type="HAMAP-Rule" id="MF_01633"/>
    </source>
</evidence>
<gene>
    <name evidence="1" type="primary">queC</name>
    <name type="ordered locus">BAB1_1973</name>
</gene>
<dbReference type="EC" id="6.3.4.20" evidence="1"/>
<dbReference type="EMBL" id="AM040264">
    <property type="protein sequence ID" value="CAJ11929.1"/>
    <property type="molecule type" value="Genomic_DNA"/>
</dbReference>
<dbReference type="RefSeq" id="WP_002965038.1">
    <property type="nucleotide sequence ID" value="NZ_KN046823.1"/>
</dbReference>
<dbReference type="SMR" id="Q2YR96"/>
<dbReference type="STRING" id="359391.BAB1_1973"/>
<dbReference type="GeneID" id="97534751"/>
<dbReference type="KEGG" id="bmf:BAB1_1973"/>
<dbReference type="PATRIC" id="fig|359391.11.peg.1211"/>
<dbReference type="HOGENOM" id="CLU_081854_1_0_5"/>
<dbReference type="PhylomeDB" id="Q2YR96"/>
<dbReference type="UniPathway" id="UPA00391"/>
<dbReference type="Proteomes" id="UP000002719">
    <property type="component" value="Chromosome I"/>
</dbReference>
<dbReference type="GO" id="GO:0005524">
    <property type="term" value="F:ATP binding"/>
    <property type="evidence" value="ECO:0007669"/>
    <property type="project" value="UniProtKB-UniRule"/>
</dbReference>
<dbReference type="GO" id="GO:0016879">
    <property type="term" value="F:ligase activity, forming carbon-nitrogen bonds"/>
    <property type="evidence" value="ECO:0007669"/>
    <property type="project" value="UniProtKB-UniRule"/>
</dbReference>
<dbReference type="GO" id="GO:0008270">
    <property type="term" value="F:zinc ion binding"/>
    <property type="evidence" value="ECO:0007669"/>
    <property type="project" value="UniProtKB-UniRule"/>
</dbReference>
<dbReference type="GO" id="GO:0008616">
    <property type="term" value="P:queuosine biosynthetic process"/>
    <property type="evidence" value="ECO:0007669"/>
    <property type="project" value="UniProtKB-UniRule"/>
</dbReference>
<dbReference type="CDD" id="cd01995">
    <property type="entry name" value="QueC-like"/>
    <property type="match status" value="1"/>
</dbReference>
<dbReference type="Gene3D" id="3.40.50.620">
    <property type="entry name" value="HUPs"/>
    <property type="match status" value="1"/>
</dbReference>
<dbReference type="HAMAP" id="MF_01633">
    <property type="entry name" value="QueC"/>
    <property type="match status" value="1"/>
</dbReference>
<dbReference type="InterPro" id="IPR018317">
    <property type="entry name" value="QueC"/>
</dbReference>
<dbReference type="InterPro" id="IPR014729">
    <property type="entry name" value="Rossmann-like_a/b/a_fold"/>
</dbReference>
<dbReference type="NCBIfam" id="TIGR00364">
    <property type="entry name" value="7-cyano-7-deazaguanine synthase QueC"/>
    <property type="match status" value="1"/>
</dbReference>
<dbReference type="PANTHER" id="PTHR42914">
    <property type="entry name" value="7-CYANO-7-DEAZAGUANINE SYNTHASE"/>
    <property type="match status" value="1"/>
</dbReference>
<dbReference type="PANTHER" id="PTHR42914:SF1">
    <property type="entry name" value="7-CYANO-7-DEAZAGUANINE SYNTHASE"/>
    <property type="match status" value="1"/>
</dbReference>
<dbReference type="Pfam" id="PF06508">
    <property type="entry name" value="QueC"/>
    <property type="match status" value="1"/>
</dbReference>
<dbReference type="PIRSF" id="PIRSF006293">
    <property type="entry name" value="ExsB"/>
    <property type="match status" value="1"/>
</dbReference>
<dbReference type="SUPFAM" id="SSF52402">
    <property type="entry name" value="Adenine nucleotide alpha hydrolases-like"/>
    <property type="match status" value="1"/>
</dbReference>
<sequence>MKTLVICSGGLDSVSLAHKMAAEHELTGLLSFDYGQRHKKELDFAQACAKRLGVPHQIIDIRTIGASLTGSALTDDVDVPDGHYAEETMKVTVVPNRNAIMLAIAFGVAAAQKADAVALAVHGGDHFIYPDCRPGFIEAFQTMQKHALDGYADVKLLAPYVHATKADIVADGAKYRTPFEATWSCYKGADRHCGRCGTCVERREAFHLAGIDDPTSYEDADFWRATTQKRNA</sequence>
<organism>
    <name type="scientific">Brucella abortus (strain 2308)</name>
    <dbReference type="NCBI Taxonomy" id="359391"/>
    <lineage>
        <taxon>Bacteria</taxon>
        <taxon>Pseudomonadati</taxon>
        <taxon>Pseudomonadota</taxon>
        <taxon>Alphaproteobacteria</taxon>
        <taxon>Hyphomicrobiales</taxon>
        <taxon>Brucellaceae</taxon>
        <taxon>Brucella/Ochrobactrum group</taxon>
        <taxon>Brucella</taxon>
    </lineage>
</organism>
<proteinExistence type="inferred from homology"/>
<name>QUEC_BRUA2</name>
<protein>
    <recommendedName>
        <fullName evidence="1">7-cyano-7-deazaguanine synthase</fullName>
        <ecNumber evidence="1">6.3.4.20</ecNumber>
    </recommendedName>
    <alternativeName>
        <fullName evidence="1">7-cyano-7-carbaguanine synthase</fullName>
    </alternativeName>
    <alternativeName>
        <fullName evidence="1">PreQ(0) synthase</fullName>
    </alternativeName>
    <alternativeName>
        <fullName evidence="1">Queuosine biosynthesis protein QueC</fullName>
    </alternativeName>
</protein>
<feature type="chain" id="PRO_0000246814" description="7-cyano-7-deazaguanine synthase">
    <location>
        <begin position="1"/>
        <end position="232"/>
    </location>
</feature>
<feature type="binding site" evidence="1">
    <location>
        <begin position="7"/>
        <end position="17"/>
    </location>
    <ligand>
        <name>ATP</name>
        <dbReference type="ChEBI" id="CHEBI:30616"/>
    </ligand>
</feature>
<feature type="binding site" evidence="1">
    <location>
        <position position="185"/>
    </location>
    <ligand>
        <name>Zn(2+)</name>
        <dbReference type="ChEBI" id="CHEBI:29105"/>
    </ligand>
</feature>
<feature type="binding site" evidence="1">
    <location>
        <position position="193"/>
    </location>
    <ligand>
        <name>Zn(2+)</name>
        <dbReference type="ChEBI" id="CHEBI:29105"/>
    </ligand>
</feature>
<feature type="binding site" evidence="1">
    <location>
        <position position="196"/>
    </location>
    <ligand>
        <name>Zn(2+)</name>
        <dbReference type="ChEBI" id="CHEBI:29105"/>
    </ligand>
</feature>
<feature type="binding site" evidence="1">
    <location>
        <position position="199"/>
    </location>
    <ligand>
        <name>Zn(2+)</name>
        <dbReference type="ChEBI" id="CHEBI:29105"/>
    </ligand>
</feature>
<comment type="function">
    <text evidence="1">Catalyzes the ATP-dependent conversion of 7-carboxy-7-deazaguanine (CDG) to 7-cyano-7-deazaguanine (preQ(0)).</text>
</comment>
<comment type="catalytic activity">
    <reaction evidence="1">
        <text>7-carboxy-7-deazaguanine + NH4(+) + ATP = 7-cyano-7-deazaguanine + ADP + phosphate + H2O + H(+)</text>
        <dbReference type="Rhea" id="RHEA:27982"/>
        <dbReference type="ChEBI" id="CHEBI:15377"/>
        <dbReference type="ChEBI" id="CHEBI:15378"/>
        <dbReference type="ChEBI" id="CHEBI:28938"/>
        <dbReference type="ChEBI" id="CHEBI:30616"/>
        <dbReference type="ChEBI" id="CHEBI:43474"/>
        <dbReference type="ChEBI" id="CHEBI:45075"/>
        <dbReference type="ChEBI" id="CHEBI:61036"/>
        <dbReference type="ChEBI" id="CHEBI:456216"/>
        <dbReference type="EC" id="6.3.4.20"/>
    </reaction>
</comment>
<comment type="cofactor">
    <cofactor evidence="1">
        <name>Zn(2+)</name>
        <dbReference type="ChEBI" id="CHEBI:29105"/>
    </cofactor>
    <text evidence="1">Binds 1 zinc ion per subunit.</text>
</comment>
<comment type="pathway">
    <text evidence="1">Purine metabolism; 7-cyano-7-deazaguanine biosynthesis.</text>
</comment>
<comment type="similarity">
    <text evidence="1">Belongs to the QueC family.</text>
</comment>
<reference key="1">
    <citation type="journal article" date="2005" name="Infect. Immun.">
        <title>Whole-genome analyses of speciation events in pathogenic Brucellae.</title>
        <authorList>
            <person name="Chain P.S."/>
            <person name="Comerci D.J."/>
            <person name="Tolmasky M.E."/>
            <person name="Larimer F.W."/>
            <person name="Malfatti S.A."/>
            <person name="Vergez L.M."/>
            <person name="Aguero F."/>
            <person name="Land M.L."/>
            <person name="Ugalde R.A."/>
            <person name="Garcia E."/>
        </authorList>
    </citation>
    <scope>NUCLEOTIDE SEQUENCE [LARGE SCALE GENOMIC DNA]</scope>
    <source>
        <strain>2308</strain>
    </source>
</reference>
<accession>Q2YR96</accession>
<keyword id="KW-0067">ATP-binding</keyword>
<keyword id="KW-0436">Ligase</keyword>
<keyword id="KW-0479">Metal-binding</keyword>
<keyword id="KW-0547">Nucleotide-binding</keyword>
<keyword id="KW-0671">Queuosine biosynthesis</keyword>
<keyword id="KW-1185">Reference proteome</keyword>
<keyword id="KW-0862">Zinc</keyword>